<reference key="1">
    <citation type="journal article" date="2016" name="Front. Microbiol.">
        <title>The complete genome sequence of hyperthermophile Dictyoglomus turgidum DSM 6724 reveals a specialized carbohydrate fermentor.</title>
        <authorList>
            <person name="Brumm P.J."/>
            <person name="Gowda K."/>
            <person name="Robb F.T."/>
            <person name="Mead D.A."/>
        </authorList>
    </citation>
    <scope>NUCLEOTIDE SEQUENCE [LARGE SCALE GENOMIC DNA]</scope>
    <source>
        <strain>DSM 6724 / Z-1310</strain>
    </source>
</reference>
<gene>
    <name evidence="1" type="primary">rpsP</name>
    <name type="ordered locus">Dtur_1537</name>
</gene>
<organism>
    <name type="scientific">Dictyoglomus turgidum (strain DSM 6724 / Z-1310)</name>
    <dbReference type="NCBI Taxonomy" id="515635"/>
    <lineage>
        <taxon>Bacteria</taxon>
        <taxon>Pseudomonadati</taxon>
        <taxon>Dictyoglomota</taxon>
        <taxon>Dictyoglomia</taxon>
        <taxon>Dictyoglomales</taxon>
        <taxon>Dictyoglomaceae</taxon>
        <taxon>Dictyoglomus</taxon>
    </lineage>
</organism>
<protein>
    <recommendedName>
        <fullName evidence="1">Small ribosomal subunit protein bS16</fullName>
    </recommendedName>
    <alternativeName>
        <fullName evidence="2">30S ribosomal protein S16</fullName>
    </alternativeName>
</protein>
<keyword id="KW-1185">Reference proteome</keyword>
<keyword id="KW-0687">Ribonucleoprotein</keyword>
<keyword id="KW-0689">Ribosomal protein</keyword>
<sequence>MVKIRLTRVGAKNKPAYRIVAMDSREPRDGKHLEILGFYDPKTDPATIQLKEERILYWLSQGAQPTDTVLSILKRYGVWDKFLAMKKSAKSSA</sequence>
<proteinExistence type="inferred from homology"/>
<dbReference type="EMBL" id="CP001251">
    <property type="protein sequence ID" value="ACK42811.1"/>
    <property type="molecule type" value="Genomic_DNA"/>
</dbReference>
<dbReference type="RefSeq" id="WP_012583886.1">
    <property type="nucleotide sequence ID" value="NC_011661.1"/>
</dbReference>
<dbReference type="RefSeq" id="YP_002353425.1">
    <property type="nucleotide sequence ID" value="NC_011661.1"/>
</dbReference>
<dbReference type="SMR" id="B8E2G7"/>
<dbReference type="FunCoup" id="B8E2G7">
    <property type="interactions" value="382"/>
</dbReference>
<dbReference type="STRING" id="515635.Dtur_1537"/>
<dbReference type="EnsemblBacteria" id="ACK42811">
    <property type="protein sequence ID" value="ACK42811"/>
    <property type="gene ID" value="Dtur_1537"/>
</dbReference>
<dbReference type="KEGG" id="dtu:Dtur_1537"/>
<dbReference type="PATRIC" id="fig|515635.4.peg.1586"/>
<dbReference type="eggNOG" id="COG0228">
    <property type="taxonomic scope" value="Bacteria"/>
</dbReference>
<dbReference type="HOGENOM" id="CLU_100590_5_2_0"/>
<dbReference type="InParanoid" id="B8E2G7"/>
<dbReference type="OrthoDB" id="9807878at2"/>
<dbReference type="Proteomes" id="UP000007719">
    <property type="component" value="Chromosome"/>
</dbReference>
<dbReference type="GO" id="GO:0005737">
    <property type="term" value="C:cytoplasm"/>
    <property type="evidence" value="ECO:0007669"/>
    <property type="project" value="UniProtKB-ARBA"/>
</dbReference>
<dbReference type="GO" id="GO:0015935">
    <property type="term" value="C:small ribosomal subunit"/>
    <property type="evidence" value="ECO:0000318"/>
    <property type="project" value="GO_Central"/>
</dbReference>
<dbReference type="GO" id="GO:0003735">
    <property type="term" value="F:structural constituent of ribosome"/>
    <property type="evidence" value="ECO:0000318"/>
    <property type="project" value="GO_Central"/>
</dbReference>
<dbReference type="GO" id="GO:0006412">
    <property type="term" value="P:translation"/>
    <property type="evidence" value="ECO:0007669"/>
    <property type="project" value="UniProtKB-UniRule"/>
</dbReference>
<dbReference type="FunFam" id="3.30.1320.10:FF:000010">
    <property type="entry name" value="30S ribosomal protein S16"/>
    <property type="match status" value="1"/>
</dbReference>
<dbReference type="Gene3D" id="3.30.1320.10">
    <property type="match status" value="1"/>
</dbReference>
<dbReference type="HAMAP" id="MF_00385">
    <property type="entry name" value="Ribosomal_bS16"/>
    <property type="match status" value="1"/>
</dbReference>
<dbReference type="InterPro" id="IPR000307">
    <property type="entry name" value="Ribosomal_bS16"/>
</dbReference>
<dbReference type="InterPro" id="IPR020592">
    <property type="entry name" value="Ribosomal_bS16_CS"/>
</dbReference>
<dbReference type="InterPro" id="IPR023803">
    <property type="entry name" value="Ribosomal_bS16_dom_sf"/>
</dbReference>
<dbReference type="NCBIfam" id="TIGR00002">
    <property type="entry name" value="S16"/>
    <property type="match status" value="1"/>
</dbReference>
<dbReference type="PANTHER" id="PTHR12919">
    <property type="entry name" value="30S RIBOSOMAL PROTEIN S16"/>
    <property type="match status" value="1"/>
</dbReference>
<dbReference type="PANTHER" id="PTHR12919:SF20">
    <property type="entry name" value="SMALL RIBOSOMAL SUBUNIT PROTEIN BS16M"/>
    <property type="match status" value="1"/>
</dbReference>
<dbReference type="Pfam" id="PF00886">
    <property type="entry name" value="Ribosomal_S16"/>
    <property type="match status" value="1"/>
</dbReference>
<dbReference type="SUPFAM" id="SSF54565">
    <property type="entry name" value="Ribosomal protein S16"/>
    <property type="match status" value="1"/>
</dbReference>
<dbReference type="PROSITE" id="PS00732">
    <property type="entry name" value="RIBOSOMAL_S16"/>
    <property type="match status" value="1"/>
</dbReference>
<name>RS16_DICTD</name>
<comment type="similarity">
    <text evidence="1">Belongs to the bacterial ribosomal protein bS16 family.</text>
</comment>
<feature type="chain" id="PRO_1000196392" description="Small ribosomal subunit protein bS16">
    <location>
        <begin position="1"/>
        <end position="93"/>
    </location>
</feature>
<accession>B8E2G7</accession>
<evidence type="ECO:0000255" key="1">
    <source>
        <dbReference type="HAMAP-Rule" id="MF_00385"/>
    </source>
</evidence>
<evidence type="ECO:0000305" key="2"/>